<comment type="function">
    <text evidence="3">Component of the cytochrome c oxidase, the last enzyme in the mitochondrial electron transport chain which drives oxidative phosphorylation. The respiratory chain contains 3 multisubunit complexes succinate dehydrogenase (complex II, CII), ubiquinol-cytochrome c oxidoreductase (cytochrome b-c1 complex, complex III, CIII) and cytochrome c oxidase (complex IV, CIV), that cooperate to transfer electrons derived from NADH and succinate to molecular oxygen, creating an electrochemical gradient over the inner membrane that drives transmembrane transport and the ATP synthase. Cytochrome c oxidase is the component of the respiratory chain that catalyzes the reduction of oxygen to water. Electrons originating from reduced cytochrome c in the intermembrane space (IMS) are transferred via the dinuclear copper A center (CU(A)) of subunit 2 and heme A of subunit 1 to the active site in subunit 1, a binuclear center (BNC) formed by heme A3 and copper B (CU(B)). The BNC reduces molecular oxygen to 2 water molecules using 4 electrons from cytochrome c in the IMS and 4 protons from the mitochondrial matrix.</text>
</comment>
<comment type="catalytic activity">
    <reaction evidence="3">
        <text>4 Fe(II)-[cytochrome c] + O2 + 8 H(+)(in) = 4 Fe(III)-[cytochrome c] + 2 H2O + 4 H(+)(out)</text>
        <dbReference type="Rhea" id="RHEA:11436"/>
        <dbReference type="Rhea" id="RHEA-COMP:10350"/>
        <dbReference type="Rhea" id="RHEA-COMP:14399"/>
        <dbReference type="ChEBI" id="CHEBI:15377"/>
        <dbReference type="ChEBI" id="CHEBI:15378"/>
        <dbReference type="ChEBI" id="CHEBI:15379"/>
        <dbReference type="ChEBI" id="CHEBI:29033"/>
        <dbReference type="ChEBI" id="CHEBI:29034"/>
        <dbReference type="EC" id="7.1.1.9"/>
    </reaction>
    <physiologicalReaction direction="left-to-right" evidence="3">
        <dbReference type="Rhea" id="RHEA:11437"/>
    </physiologicalReaction>
</comment>
<comment type="cofactor">
    <cofactor evidence="2">
        <name>heme</name>
        <dbReference type="ChEBI" id="CHEBI:30413"/>
    </cofactor>
    <text evidence="2">Binds 2 heme A groups non-covalently per subunit.</text>
</comment>
<comment type="cofactor">
    <cofactor evidence="2">
        <name>Cu cation</name>
        <dbReference type="ChEBI" id="CHEBI:23378"/>
    </cofactor>
    <text evidence="2">Binds a copper B center.</text>
</comment>
<comment type="pathway">
    <text evidence="3">Energy metabolism; oxidative phosphorylation.</text>
</comment>
<comment type="subunit">
    <text evidence="1 2">Component of the cytochrome c oxidase (complex IV, CIV), a multisubunit enzyme composed of 14 subunits. The complex is composed of a catalytic core of 3 subunits MT-CO1, MT-CO2 and MT-CO3, encoded in the mitochondrial DNA, and 11 supernumerary subunits COX4I, COX5A, COX5B, COX6A, COX6B, COX6C, COX7A, COX7B, COX7C, COX8 and NDUFA4, which are encoded in the nuclear genome. The complex exists as a monomer or a dimer and forms supercomplexes (SCs) in the inner mitochondrial membrane with NADH-ubiquinone oxidoreductase (complex I, CI) and ubiquinol-cytochrome c oxidoreductase (cytochrome b-c1 complex, complex III, CIII), resulting in different assemblies (supercomplex SCI(1)III(2)IV(1) and megacomplex MCI(2)III(2)IV(2)) (By similarity). As a newly synthesized protein, rapidly incorporates into a multi-subunit assembly intermediate in the inner membrane, called MITRAC (mitochondrial translation regulation assembly intermediate of cytochrome c oxidase) complex, whose core components are COA3/MITRAC12 and COX14. Within the MITRAC complex, interacts with COA3 and with SMIM20/MITRAC7; the interaction with SMIM20 stabilizes the newly synthesized MT-CO1 and prevents its premature turnover. Interacts with TMEM177 in a COX20-dependent manner (By similarity).</text>
</comment>
<comment type="subcellular location">
    <subcellularLocation>
        <location evidence="2">Mitochondrion inner membrane</location>
        <topology evidence="2">Multi-pass membrane protein</topology>
    </subcellularLocation>
</comment>
<comment type="similarity">
    <text evidence="4">Belongs to the heme-copper respiratory oxidase family.</text>
</comment>
<name>COX1_CANSI</name>
<geneLocation type="mitochondrion"/>
<protein>
    <recommendedName>
        <fullName>Cytochrome c oxidase subunit 1</fullName>
        <ecNumber>7.1.1.9</ecNumber>
    </recommendedName>
    <alternativeName>
        <fullName>Cytochrome c oxidase polypeptide I</fullName>
    </alternativeName>
</protein>
<accession>Q33375</accession>
<reference key="1">
    <citation type="journal article" date="1994" name="Mol. Ecol.">
        <title>Molecular genetics of the most endangered canid: the Ethiopian wolf Canis simensis.</title>
        <authorList>
            <person name="Gottelli D."/>
            <person name="Sillero-Zubiri C."/>
            <person name="Applebaum G.D."/>
            <person name="Roy M.S."/>
            <person name="Girman D.J."/>
            <person name="Garcia-Moreno J."/>
            <person name="Ostrander E.A."/>
            <person name="Wayne R.K."/>
        </authorList>
    </citation>
    <scope>NUCLEOTIDE SEQUENCE [GENOMIC DNA]</scope>
</reference>
<proteinExistence type="inferred from homology"/>
<feature type="chain" id="PRO_0000183301" description="Cytochrome c oxidase subunit 1">
    <location>
        <begin position="1" status="less than"/>
        <end position="196" status="greater than"/>
    </location>
</feature>
<feature type="transmembrane region" description="Helical; Name=VI" evidence="2">
    <location>
        <begin position="1" status="less than"/>
        <end position="27"/>
    </location>
</feature>
<feature type="topological domain" description="Mitochondrial matrix" evidence="2">
    <location>
        <begin position="28"/>
        <end position="35"/>
    </location>
</feature>
<feature type="transmembrane region" description="Helical; Name=VII" evidence="2">
    <location>
        <begin position="36"/>
        <end position="52"/>
    </location>
</feature>
<feature type="topological domain" description="Mitochondrial intermembrane" evidence="2">
    <location>
        <begin position="53"/>
        <end position="64"/>
    </location>
</feature>
<feature type="transmembrane region" description="Helical; Name=VIII" evidence="2">
    <location>
        <begin position="65"/>
        <end position="93"/>
    </location>
</feature>
<feature type="topological domain" description="Mitochondrial matrix" evidence="2">
    <location>
        <begin position="94"/>
        <end position="101"/>
    </location>
</feature>
<feature type="transmembrane region" description="Helical; Name=IX" evidence="2">
    <location>
        <begin position="102"/>
        <end position="123"/>
    </location>
</feature>
<feature type="topological domain" description="Mitochondrial intermembrane" evidence="2">
    <location>
        <begin position="124"/>
        <end position="136"/>
    </location>
</feature>
<feature type="transmembrane region" description="Helical; Name=X" evidence="2">
    <location>
        <begin position="137"/>
        <end position="166"/>
    </location>
</feature>
<feature type="topological domain" description="Mitochondrial matrix" evidence="2">
    <location>
        <begin position="167"/>
        <end position="172"/>
    </location>
</feature>
<feature type="transmembrane region" description="Helical; Name=XI" evidence="2">
    <location>
        <begin position="173"/>
        <end position="196" status="greater than"/>
    </location>
</feature>
<feature type="binding site" evidence="2">
    <location>
        <position position="6"/>
    </location>
    <ligand>
        <name>Cu cation</name>
        <dbReference type="ChEBI" id="CHEBI:23378"/>
        <label>B</label>
    </ligand>
</feature>
<feature type="binding site" evidence="2">
    <location>
        <position position="10"/>
    </location>
    <ligand>
        <name>O2</name>
        <dbReference type="ChEBI" id="CHEBI:15379"/>
    </ligand>
</feature>
<feature type="binding site" evidence="2">
    <location>
        <position position="56"/>
    </location>
    <ligand>
        <name>Cu cation</name>
        <dbReference type="ChEBI" id="CHEBI:23378"/>
        <label>B</label>
    </ligand>
</feature>
<feature type="binding site" evidence="2">
    <location>
        <position position="57"/>
    </location>
    <ligand>
        <name>Cu cation</name>
        <dbReference type="ChEBI" id="CHEBI:23378"/>
        <label>B</label>
    </ligand>
</feature>
<feature type="binding site" evidence="2">
    <location>
        <position position="134"/>
    </location>
    <ligand>
        <name>Mg(2+)</name>
        <dbReference type="ChEBI" id="CHEBI:18420"/>
        <note>ligand shared with MT-CO2</note>
    </ligand>
</feature>
<feature type="binding site" evidence="2">
    <location>
        <position position="135"/>
    </location>
    <ligand>
        <name>Mg(2+)</name>
        <dbReference type="ChEBI" id="CHEBI:18420"/>
        <note>ligand shared with MT-CO2</note>
    </ligand>
</feature>
<feature type="binding site" description="axial binding residue" evidence="2">
    <location>
        <position position="142"/>
    </location>
    <ligand>
        <name>heme a3</name>
        <dbReference type="ChEBI" id="CHEBI:83282"/>
        <note>high-spin</note>
    </ligand>
    <ligandPart>
        <name>Fe</name>
        <dbReference type="ChEBI" id="CHEBI:18248"/>
    </ligandPart>
</feature>
<feature type="binding site" description="axial binding residue" evidence="2">
    <location>
        <position position="144"/>
    </location>
    <ligand>
        <name>Fe(II)-heme a</name>
        <dbReference type="ChEBI" id="CHEBI:61715"/>
        <note>low-spin</note>
    </ligand>
    <ligandPart>
        <name>Fe</name>
        <dbReference type="ChEBI" id="CHEBI:18248"/>
    </ligandPart>
</feature>
<feature type="cross-link" description="1'-histidyl-3'-tyrosine (His-Tyr)" evidence="2">
    <location>
        <begin position="6"/>
        <end position="10"/>
    </location>
</feature>
<feature type="non-terminal residue">
    <location>
        <position position="1"/>
    </location>
</feature>
<feature type="non-terminal residue">
    <location>
        <position position="196"/>
    </location>
</feature>
<dbReference type="EC" id="7.1.1.9"/>
<dbReference type="EMBL" id="L29413">
    <property type="protein sequence ID" value="AAA53663.2"/>
    <property type="status" value="ALT_SEQ"/>
    <property type="molecule type" value="Genomic_DNA"/>
</dbReference>
<dbReference type="UniPathway" id="UPA00705"/>
<dbReference type="GO" id="GO:0005743">
    <property type="term" value="C:mitochondrial inner membrane"/>
    <property type="evidence" value="ECO:0007669"/>
    <property type="project" value="UniProtKB-SubCell"/>
</dbReference>
<dbReference type="GO" id="GO:0045277">
    <property type="term" value="C:respiratory chain complex IV"/>
    <property type="evidence" value="ECO:0000250"/>
    <property type="project" value="UniProtKB"/>
</dbReference>
<dbReference type="GO" id="GO:0004129">
    <property type="term" value="F:cytochrome-c oxidase activity"/>
    <property type="evidence" value="ECO:0007669"/>
    <property type="project" value="UniProtKB-EC"/>
</dbReference>
<dbReference type="GO" id="GO:0020037">
    <property type="term" value="F:heme binding"/>
    <property type="evidence" value="ECO:0007669"/>
    <property type="project" value="InterPro"/>
</dbReference>
<dbReference type="GO" id="GO:0046872">
    <property type="term" value="F:metal ion binding"/>
    <property type="evidence" value="ECO:0007669"/>
    <property type="project" value="UniProtKB-KW"/>
</dbReference>
<dbReference type="GO" id="GO:0015990">
    <property type="term" value="P:electron transport coupled proton transport"/>
    <property type="evidence" value="ECO:0007669"/>
    <property type="project" value="TreeGrafter"/>
</dbReference>
<dbReference type="GO" id="GO:0006123">
    <property type="term" value="P:mitochondrial electron transport, cytochrome c to oxygen"/>
    <property type="evidence" value="ECO:0007669"/>
    <property type="project" value="TreeGrafter"/>
</dbReference>
<dbReference type="FunFam" id="1.20.210.10:FF:000009">
    <property type="entry name" value="Cytochrome c oxidase subunit 1"/>
    <property type="match status" value="1"/>
</dbReference>
<dbReference type="Gene3D" id="1.20.210.10">
    <property type="entry name" value="Cytochrome c oxidase-like, subunit I domain"/>
    <property type="match status" value="1"/>
</dbReference>
<dbReference type="InterPro" id="IPR023616">
    <property type="entry name" value="Cyt_c_oxase-like_su1_dom"/>
</dbReference>
<dbReference type="InterPro" id="IPR036927">
    <property type="entry name" value="Cyt_c_oxase-like_su1_sf"/>
</dbReference>
<dbReference type="InterPro" id="IPR000883">
    <property type="entry name" value="Cyt_C_Oxase_1"/>
</dbReference>
<dbReference type="InterPro" id="IPR023615">
    <property type="entry name" value="Cyt_c_Oxase_su1_BS"/>
</dbReference>
<dbReference type="PANTHER" id="PTHR10422">
    <property type="entry name" value="CYTOCHROME C OXIDASE SUBUNIT 1"/>
    <property type="match status" value="1"/>
</dbReference>
<dbReference type="PANTHER" id="PTHR10422:SF18">
    <property type="entry name" value="CYTOCHROME C OXIDASE SUBUNIT 1"/>
    <property type="match status" value="1"/>
</dbReference>
<dbReference type="Pfam" id="PF00115">
    <property type="entry name" value="COX1"/>
    <property type="match status" value="1"/>
</dbReference>
<dbReference type="PRINTS" id="PR01165">
    <property type="entry name" value="CYCOXIDASEI"/>
</dbReference>
<dbReference type="SUPFAM" id="SSF81442">
    <property type="entry name" value="Cytochrome c oxidase subunit I-like"/>
    <property type="match status" value="1"/>
</dbReference>
<dbReference type="PROSITE" id="PS50855">
    <property type="entry name" value="COX1"/>
    <property type="match status" value="1"/>
</dbReference>
<dbReference type="PROSITE" id="PS00077">
    <property type="entry name" value="COX1_CUB"/>
    <property type="match status" value="1"/>
</dbReference>
<organism>
    <name type="scientific">Canis simensis</name>
    <name type="common">Ethiopian wolf</name>
    <name type="synonym">Simenia simensis</name>
    <dbReference type="NCBI Taxonomy" id="32534"/>
    <lineage>
        <taxon>Eukaryota</taxon>
        <taxon>Metazoa</taxon>
        <taxon>Chordata</taxon>
        <taxon>Craniata</taxon>
        <taxon>Vertebrata</taxon>
        <taxon>Euteleostomi</taxon>
        <taxon>Mammalia</taxon>
        <taxon>Eutheria</taxon>
        <taxon>Laurasiatheria</taxon>
        <taxon>Carnivora</taxon>
        <taxon>Caniformia</taxon>
        <taxon>Canidae</taxon>
        <taxon>Canis</taxon>
    </lineage>
</organism>
<sequence length="196" mass="22107">XWFFGHPEVYILILPGFGMISHIVTYYSGKKEPFGYMGMVWAMMSIGFLGFIVWAHHMFTVGMDVDTRAYFTSATMIIAIPTGVKVFSWLATLHGGNIKWSPAMLWALGFIFLFTVGGLTGIVLANSSLDIVLHDTYYVVAHFHYVLSMGAVFAIMGGFAHWFPLFSGYTLNDTWAKIHFTIMFVGVNMTFFPQHF</sequence>
<keyword id="KW-0186">Copper</keyword>
<keyword id="KW-0249">Electron transport</keyword>
<keyword id="KW-0349">Heme</keyword>
<keyword id="KW-0408">Iron</keyword>
<keyword id="KW-0460">Magnesium</keyword>
<keyword id="KW-0472">Membrane</keyword>
<keyword id="KW-0479">Metal-binding</keyword>
<keyword id="KW-0496">Mitochondrion</keyword>
<keyword id="KW-0999">Mitochondrion inner membrane</keyword>
<keyword id="KW-0679">Respiratory chain</keyword>
<keyword id="KW-0915">Sodium</keyword>
<keyword id="KW-1278">Translocase</keyword>
<keyword id="KW-0812">Transmembrane</keyword>
<keyword id="KW-1133">Transmembrane helix</keyword>
<keyword id="KW-0813">Transport</keyword>
<gene>
    <name type="primary">MT-CO1</name>
    <name type="synonym">COI</name>
    <name type="synonym">COXI</name>
    <name type="synonym">MTCO1</name>
</gene>
<evidence type="ECO:0000250" key="1">
    <source>
        <dbReference type="UniProtKB" id="P00395"/>
    </source>
</evidence>
<evidence type="ECO:0000250" key="2">
    <source>
        <dbReference type="UniProtKB" id="P00396"/>
    </source>
</evidence>
<evidence type="ECO:0000250" key="3">
    <source>
        <dbReference type="UniProtKB" id="P00401"/>
    </source>
</evidence>
<evidence type="ECO:0000305" key="4"/>